<organism>
    <name type="scientific">Arabidopsis thaliana</name>
    <name type="common">Mouse-ear cress</name>
    <dbReference type="NCBI Taxonomy" id="3702"/>
    <lineage>
        <taxon>Eukaryota</taxon>
        <taxon>Viridiplantae</taxon>
        <taxon>Streptophyta</taxon>
        <taxon>Embryophyta</taxon>
        <taxon>Tracheophyta</taxon>
        <taxon>Spermatophyta</taxon>
        <taxon>Magnoliopsida</taxon>
        <taxon>eudicotyledons</taxon>
        <taxon>Gunneridae</taxon>
        <taxon>Pentapetalae</taxon>
        <taxon>rosids</taxon>
        <taxon>malvids</taxon>
        <taxon>Brassicales</taxon>
        <taxon>Brassicaceae</taxon>
        <taxon>Camelineae</taxon>
        <taxon>Arabidopsis</taxon>
    </lineage>
</organism>
<comment type="cofactor">
    <cofactor evidence="1">
        <name>heme</name>
        <dbReference type="ChEBI" id="CHEBI:30413"/>
    </cofactor>
</comment>
<comment type="subcellular location">
    <subcellularLocation>
        <location evidence="3">Membrane</location>
        <topology evidence="3">Single-pass membrane protein</topology>
    </subcellularLocation>
</comment>
<comment type="similarity">
    <text evidence="3">Belongs to the cytochrome P450 family.</text>
</comment>
<feature type="chain" id="PRO_0000052106" description="Cytochrome P450 71B29">
    <location>
        <begin position="1"/>
        <end position="490"/>
    </location>
</feature>
<feature type="transmembrane region" description="Helical" evidence="2">
    <location>
        <begin position="1"/>
        <end position="21"/>
    </location>
</feature>
<feature type="binding site" description="axial binding residue" evidence="1">
    <location>
        <position position="440"/>
    </location>
    <ligand>
        <name>heme</name>
        <dbReference type="ChEBI" id="CHEBI:30413"/>
    </ligand>
    <ligandPart>
        <name>Fe</name>
        <dbReference type="ChEBI" id="CHEBI:18248"/>
    </ligandPart>
</feature>
<protein>
    <recommendedName>
        <fullName>Cytochrome P450 71B29</fullName>
        <ecNumber>1.14.-.-</ecNumber>
    </recommendedName>
</protein>
<proteinExistence type="inferred from homology"/>
<gene>
    <name type="primary">CYP71B29</name>
    <name type="ordered locus">At1g13100</name>
    <name type="ORF">F3F19.12</name>
</gene>
<keyword id="KW-0349">Heme</keyword>
<keyword id="KW-0408">Iron</keyword>
<keyword id="KW-0472">Membrane</keyword>
<keyword id="KW-0479">Metal-binding</keyword>
<keyword id="KW-0503">Monooxygenase</keyword>
<keyword id="KW-0560">Oxidoreductase</keyword>
<keyword id="KW-1185">Reference proteome</keyword>
<keyword id="KW-0812">Transmembrane</keyword>
<keyword id="KW-1133">Transmembrane helix</keyword>
<sequence length="490" mass="56005">MAIILCFLILLPLILIFLKKLKHSKWKLPPGPPKLPFIGNLHQLQELPPRNLNHKYGPVILLRFGFVPLVVISSKEAAEEVLKIHDLECCSRPETAGTRKISYNFKDIGFAPYGEEWKAMRKLSVVELFTAKKHQYFRSIREEENDLLVKKLTELALTRSPVNLKKTLFTLVGSIVCRIGFGFNLHECEFIDENSISDLVDKSEILEMTSMFSDFFPGGIGRFIDWISGQNKRFDNVFSDLDTFFQNILDYHLKPGRKVADSSDIIDVVINMIKKQEKDGDSFKLTTDHLKGMISDIFLAGVSTSASTLIWAITELVRNRKVMKKVQEEIRTTLGDKKERITEQDLTNLHYFKLVVKEIFRLHPAVPFLLPRETLSHVKIQGYDIPAKTQIMINVYAIARDPKLWTNPDEFNPDRFLDSSIDYKGLNFELLPFGSGRRICPGMTMGITLVEFALLNLLYFFDWGLPEKEEADKIITGNGVAVGLVQVLLH</sequence>
<dbReference type="EC" id="1.14.-.-"/>
<dbReference type="EMBL" id="AC007357">
    <property type="protein sequence ID" value="AAD31063.1"/>
    <property type="molecule type" value="Genomic_DNA"/>
</dbReference>
<dbReference type="EMBL" id="CP002684">
    <property type="protein sequence ID" value="AEE28970.1"/>
    <property type="molecule type" value="Genomic_DNA"/>
</dbReference>
<dbReference type="PIR" id="B86265">
    <property type="entry name" value="B86265"/>
</dbReference>
<dbReference type="RefSeq" id="NP_172769.1">
    <property type="nucleotide sequence ID" value="NM_101180.2"/>
</dbReference>
<dbReference type="SMR" id="Q9SAE4"/>
<dbReference type="BioGRID" id="23107">
    <property type="interactions" value="1"/>
</dbReference>
<dbReference type="FunCoup" id="Q9SAE4">
    <property type="interactions" value="225"/>
</dbReference>
<dbReference type="STRING" id="3702.Q9SAE4"/>
<dbReference type="iPTMnet" id="Q9SAE4"/>
<dbReference type="PaxDb" id="3702-AT1G13100.1"/>
<dbReference type="ProteomicsDB" id="240581"/>
<dbReference type="EnsemblPlants" id="AT1G13100.1">
    <property type="protein sequence ID" value="AT1G13100.1"/>
    <property type="gene ID" value="AT1G13100"/>
</dbReference>
<dbReference type="GeneID" id="837867"/>
<dbReference type="Gramene" id="AT1G13100.1">
    <property type="protein sequence ID" value="AT1G13100.1"/>
    <property type="gene ID" value="AT1G13100"/>
</dbReference>
<dbReference type="KEGG" id="ath:AT1G13100"/>
<dbReference type="Araport" id="AT1G13100"/>
<dbReference type="TAIR" id="AT1G13100">
    <property type="gene designation" value="CYP71B29"/>
</dbReference>
<dbReference type="eggNOG" id="KOG0156">
    <property type="taxonomic scope" value="Eukaryota"/>
</dbReference>
<dbReference type="HOGENOM" id="CLU_001570_4_1_1"/>
<dbReference type="InParanoid" id="Q9SAE4"/>
<dbReference type="OMA" id="WSNSEEF"/>
<dbReference type="PhylomeDB" id="Q9SAE4"/>
<dbReference type="BioCyc" id="ARA:AT1G13100-MONOMER"/>
<dbReference type="PRO" id="PR:Q9SAE4"/>
<dbReference type="Proteomes" id="UP000006548">
    <property type="component" value="Chromosome 1"/>
</dbReference>
<dbReference type="ExpressionAtlas" id="Q9SAE4">
    <property type="expression patterns" value="baseline and differential"/>
</dbReference>
<dbReference type="GO" id="GO:0005576">
    <property type="term" value="C:extracellular region"/>
    <property type="evidence" value="ECO:0007005"/>
    <property type="project" value="TAIR"/>
</dbReference>
<dbReference type="GO" id="GO:0016020">
    <property type="term" value="C:membrane"/>
    <property type="evidence" value="ECO:0007669"/>
    <property type="project" value="UniProtKB-SubCell"/>
</dbReference>
<dbReference type="GO" id="GO:0009506">
    <property type="term" value="C:plasmodesma"/>
    <property type="evidence" value="ECO:0007005"/>
    <property type="project" value="TAIR"/>
</dbReference>
<dbReference type="GO" id="GO:0020037">
    <property type="term" value="F:heme binding"/>
    <property type="evidence" value="ECO:0007669"/>
    <property type="project" value="InterPro"/>
</dbReference>
<dbReference type="GO" id="GO:0005506">
    <property type="term" value="F:iron ion binding"/>
    <property type="evidence" value="ECO:0007669"/>
    <property type="project" value="InterPro"/>
</dbReference>
<dbReference type="GO" id="GO:0004497">
    <property type="term" value="F:monooxygenase activity"/>
    <property type="evidence" value="ECO:0007669"/>
    <property type="project" value="UniProtKB-KW"/>
</dbReference>
<dbReference type="GO" id="GO:0016705">
    <property type="term" value="F:oxidoreductase activity, acting on paired donors, with incorporation or reduction of molecular oxygen"/>
    <property type="evidence" value="ECO:0007669"/>
    <property type="project" value="InterPro"/>
</dbReference>
<dbReference type="CDD" id="cd11072">
    <property type="entry name" value="CYP71-like"/>
    <property type="match status" value="1"/>
</dbReference>
<dbReference type="FunFam" id="1.10.630.10:FF:000011">
    <property type="entry name" value="Cytochrome P450 83B1"/>
    <property type="match status" value="1"/>
</dbReference>
<dbReference type="Gene3D" id="1.10.630.10">
    <property type="entry name" value="Cytochrome P450"/>
    <property type="match status" value="1"/>
</dbReference>
<dbReference type="InterPro" id="IPR001128">
    <property type="entry name" value="Cyt_P450"/>
</dbReference>
<dbReference type="InterPro" id="IPR017972">
    <property type="entry name" value="Cyt_P450_CS"/>
</dbReference>
<dbReference type="InterPro" id="IPR002401">
    <property type="entry name" value="Cyt_P450_E_grp-I"/>
</dbReference>
<dbReference type="InterPro" id="IPR036396">
    <property type="entry name" value="Cyt_P450_sf"/>
</dbReference>
<dbReference type="InterPro" id="IPR050193">
    <property type="entry name" value="Cytochrome_P450_71"/>
</dbReference>
<dbReference type="PANTHER" id="PTHR47956">
    <property type="entry name" value="CYTOCHROME P450 71B11-RELATED"/>
    <property type="match status" value="1"/>
</dbReference>
<dbReference type="PANTHER" id="PTHR47956:SF97">
    <property type="entry name" value="CYTOCHROME P450 71B29"/>
    <property type="match status" value="1"/>
</dbReference>
<dbReference type="Pfam" id="PF00067">
    <property type="entry name" value="p450"/>
    <property type="match status" value="1"/>
</dbReference>
<dbReference type="PRINTS" id="PR00463">
    <property type="entry name" value="EP450I"/>
</dbReference>
<dbReference type="PRINTS" id="PR00385">
    <property type="entry name" value="P450"/>
</dbReference>
<dbReference type="SUPFAM" id="SSF48264">
    <property type="entry name" value="Cytochrome P450"/>
    <property type="match status" value="1"/>
</dbReference>
<dbReference type="PROSITE" id="PS00086">
    <property type="entry name" value="CYTOCHROME_P450"/>
    <property type="match status" value="1"/>
</dbReference>
<accession>Q9SAE4</accession>
<name>C71BT_ARATH</name>
<evidence type="ECO:0000250" key="1"/>
<evidence type="ECO:0000255" key="2"/>
<evidence type="ECO:0000305" key="3"/>
<reference key="1">
    <citation type="journal article" date="2000" name="Nature">
        <title>Sequence and analysis of chromosome 1 of the plant Arabidopsis thaliana.</title>
        <authorList>
            <person name="Theologis A."/>
            <person name="Ecker J.R."/>
            <person name="Palm C.J."/>
            <person name="Federspiel N.A."/>
            <person name="Kaul S."/>
            <person name="White O."/>
            <person name="Alonso J."/>
            <person name="Altafi H."/>
            <person name="Araujo R."/>
            <person name="Bowman C.L."/>
            <person name="Brooks S.Y."/>
            <person name="Buehler E."/>
            <person name="Chan A."/>
            <person name="Chao Q."/>
            <person name="Chen H."/>
            <person name="Cheuk R.F."/>
            <person name="Chin C.W."/>
            <person name="Chung M.K."/>
            <person name="Conn L."/>
            <person name="Conway A.B."/>
            <person name="Conway A.R."/>
            <person name="Creasy T.H."/>
            <person name="Dewar K."/>
            <person name="Dunn P."/>
            <person name="Etgu P."/>
            <person name="Feldblyum T.V."/>
            <person name="Feng J.-D."/>
            <person name="Fong B."/>
            <person name="Fujii C.Y."/>
            <person name="Gill J.E."/>
            <person name="Goldsmith A.D."/>
            <person name="Haas B."/>
            <person name="Hansen N.F."/>
            <person name="Hughes B."/>
            <person name="Huizar L."/>
            <person name="Hunter J.L."/>
            <person name="Jenkins J."/>
            <person name="Johnson-Hopson C."/>
            <person name="Khan S."/>
            <person name="Khaykin E."/>
            <person name="Kim C.J."/>
            <person name="Koo H.L."/>
            <person name="Kremenetskaia I."/>
            <person name="Kurtz D.B."/>
            <person name="Kwan A."/>
            <person name="Lam B."/>
            <person name="Langin-Hooper S."/>
            <person name="Lee A."/>
            <person name="Lee J.M."/>
            <person name="Lenz C.A."/>
            <person name="Li J.H."/>
            <person name="Li Y.-P."/>
            <person name="Lin X."/>
            <person name="Liu S.X."/>
            <person name="Liu Z.A."/>
            <person name="Luros J.S."/>
            <person name="Maiti R."/>
            <person name="Marziali A."/>
            <person name="Militscher J."/>
            <person name="Miranda M."/>
            <person name="Nguyen M."/>
            <person name="Nierman W.C."/>
            <person name="Osborne B.I."/>
            <person name="Pai G."/>
            <person name="Peterson J."/>
            <person name="Pham P.K."/>
            <person name="Rizzo M."/>
            <person name="Rooney T."/>
            <person name="Rowley D."/>
            <person name="Sakano H."/>
            <person name="Salzberg S.L."/>
            <person name="Schwartz J.R."/>
            <person name="Shinn P."/>
            <person name="Southwick A.M."/>
            <person name="Sun H."/>
            <person name="Tallon L.J."/>
            <person name="Tambunga G."/>
            <person name="Toriumi M.J."/>
            <person name="Town C.D."/>
            <person name="Utterback T."/>
            <person name="Van Aken S."/>
            <person name="Vaysberg M."/>
            <person name="Vysotskaia V.S."/>
            <person name="Walker M."/>
            <person name="Wu D."/>
            <person name="Yu G."/>
            <person name="Fraser C.M."/>
            <person name="Venter J.C."/>
            <person name="Davis R.W."/>
        </authorList>
    </citation>
    <scope>NUCLEOTIDE SEQUENCE [LARGE SCALE GENOMIC DNA]</scope>
    <source>
        <strain>cv. Columbia</strain>
    </source>
</reference>
<reference key="2">
    <citation type="journal article" date="2017" name="Plant J.">
        <title>Araport11: a complete reannotation of the Arabidopsis thaliana reference genome.</title>
        <authorList>
            <person name="Cheng C.Y."/>
            <person name="Krishnakumar V."/>
            <person name="Chan A.P."/>
            <person name="Thibaud-Nissen F."/>
            <person name="Schobel S."/>
            <person name="Town C.D."/>
        </authorList>
    </citation>
    <scope>GENOME REANNOTATION</scope>
    <source>
        <strain>cv. Columbia</strain>
    </source>
</reference>